<comment type="function">
    <text evidence="1">Probably involved in ribonucleotide reductase function.</text>
</comment>
<comment type="similarity">
    <text evidence="1">Belongs to the NrdI family.</text>
</comment>
<evidence type="ECO:0000255" key="1">
    <source>
        <dbReference type="HAMAP-Rule" id="MF_00128"/>
    </source>
</evidence>
<sequence length="150" mass="16564">MDSTGRNLVYFSSVSENTHRFVQKLGIPAIRIPLHGRIEVDHPYVLLLPTYGGGRATPDLNAGGYVPKQVIAFLNNEHNRSLIRGVIAAGNNNFGAEFAYAGNVVSRKCGVPYLYRFELMGTQDDVDAVRAGLAEFWKEQTCHQPSLQSL</sequence>
<gene>
    <name evidence="1" type="primary">nrdI</name>
    <name type="ordered locus">MAV_3920</name>
</gene>
<dbReference type="EMBL" id="CP000479">
    <property type="protein sequence ID" value="ABK68037.1"/>
    <property type="molecule type" value="Genomic_DNA"/>
</dbReference>
<dbReference type="RefSeq" id="WP_003874934.1">
    <property type="nucleotide sequence ID" value="NC_008595.1"/>
</dbReference>
<dbReference type="SMR" id="A0QJJ4"/>
<dbReference type="GeneID" id="75271317"/>
<dbReference type="KEGG" id="mav:MAV_3920"/>
<dbReference type="HOGENOM" id="CLU_114845_0_0_11"/>
<dbReference type="Proteomes" id="UP000001574">
    <property type="component" value="Chromosome"/>
</dbReference>
<dbReference type="GO" id="GO:0010181">
    <property type="term" value="F:FMN binding"/>
    <property type="evidence" value="ECO:0007669"/>
    <property type="project" value="InterPro"/>
</dbReference>
<dbReference type="GO" id="GO:0036211">
    <property type="term" value="P:protein modification process"/>
    <property type="evidence" value="ECO:0007669"/>
    <property type="project" value="InterPro"/>
</dbReference>
<dbReference type="FunFam" id="3.40.50.360:FF:000005">
    <property type="entry name" value="Protein NrdI"/>
    <property type="match status" value="1"/>
</dbReference>
<dbReference type="Gene3D" id="3.40.50.360">
    <property type="match status" value="1"/>
</dbReference>
<dbReference type="HAMAP" id="MF_00128">
    <property type="entry name" value="NrdI"/>
    <property type="match status" value="1"/>
</dbReference>
<dbReference type="InterPro" id="IPR029039">
    <property type="entry name" value="Flavoprotein-like_sf"/>
</dbReference>
<dbReference type="InterPro" id="IPR020852">
    <property type="entry name" value="RNR_Ib_NrdI_bac"/>
</dbReference>
<dbReference type="InterPro" id="IPR004465">
    <property type="entry name" value="RNR_NrdI"/>
</dbReference>
<dbReference type="NCBIfam" id="TIGR00333">
    <property type="entry name" value="nrdI"/>
    <property type="match status" value="1"/>
</dbReference>
<dbReference type="PANTHER" id="PTHR37297">
    <property type="entry name" value="PROTEIN NRDI"/>
    <property type="match status" value="1"/>
</dbReference>
<dbReference type="PANTHER" id="PTHR37297:SF1">
    <property type="entry name" value="PROTEIN NRDI"/>
    <property type="match status" value="1"/>
</dbReference>
<dbReference type="Pfam" id="PF07972">
    <property type="entry name" value="Flavodoxin_NdrI"/>
    <property type="match status" value="1"/>
</dbReference>
<dbReference type="PIRSF" id="PIRSF005087">
    <property type="entry name" value="NrdI"/>
    <property type="match status" value="1"/>
</dbReference>
<dbReference type="SUPFAM" id="SSF52218">
    <property type="entry name" value="Flavoproteins"/>
    <property type="match status" value="1"/>
</dbReference>
<name>NRDI_MYCA1</name>
<proteinExistence type="inferred from homology"/>
<feature type="chain" id="PRO_1000016506" description="Protein NrdI">
    <location>
        <begin position="1"/>
        <end position="150"/>
    </location>
</feature>
<protein>
    <recommendedName>
        <fullName evidence="1">Protein NrdI</fullName>
    </recommendedName>
</protein>
<reference key="1">
    <citation type="submission" date="2006-10" db="EMBL/GenBank/DDBJ databases">
        <authorList>
            <person name="Fleischmann R.D."/>
            <person name="Dodson R.J."/>
            <person name="Haft D.H."/>
            <person name="Merkel J.S."/>
            <person name="Nelson W.C."/>
            <person name="Fraser C.M."/>
        </authorList>
    </citation>
    <scope>NUCLEOTIDE SEQUENCE [LARGE SCALE GENOMIC DNA]</scope>
    <source>
        <strain>104</strain>
    </source>
</reference>
<accession>A0QJJ4</accession>
<organism>
    <name type="scientific">Mycobacterium avium (strain 104)</name>
    <dbReference type="NCBI Taxonomy" id="243243"/>
    <lineage>
        <taxon>Bacteria</taxon>
        <taxon>Bacillati</taxon>
        <taxon>Actinomycetota</taxon>
        <taxon>Actinomycetes</taxon>
        <taxon>Mycobacteriales</taxon>
        <taxon>Mycobacteriaceae</taxon>
        <taxon>Mycobacterium</taxon>
        <taxon>Mycobacterium avium complex (MAC)</taxon>
    </lineage>
</organism>